<organism>
    <name type="scientific">Vibrio parahaemolyticus serotype O3:K6 (strain RIMD 2210633)</name>
    <dbReference type="NCBI Taxonomy" id="223926"/>
    <lineage>
        <taxon>Bacteria</taxon>
        <taxon>Pseudomonadati</taxon>
        <taxon>Pseudomonadota</taxon>
        <taxon>Gammaproteobacteria</taxon>
        <taxon>Vibrionales</taxon>
        <taxon>Vibrionaceae</taxon>
        <taxon>Vibrio</taxon>
    </lineage>
</organism>
<keyword id="KW-0067">ATP-binding</keyword>
<keyword id="KW-0131">Cell cycle</keyword>
<keyword id="KW-0132">Cell division</keyword>
<keyword id="KW-0159">Chromosome partition</keyword>
<keyword id="KW-0175">Coiled coil</keyword>
<keyword id="KW-0963">Cytoplasm</keyword>
<keyword id="KW-0226">DNA condensation</keyword>
<keyword id="KW-0238">DNA-binding</keyword>
<keyword id="KW-0547">Nucleotide-binding</keyword>
<name>MUKB_VIBPA</name>
<dbReference type="EMBL" id="BA000031">
    <property type="protein sequence ID" value="BAC59300.1"/>
    <property type="molecule type" value="Genomic_DNA"/>
</dbReference>
<dbReference type="RefSeq" id="NP_797416.1">
    <property type="nucleotide sequence ID" value="NC_004603.1"/>
</dbReference>
<dbReference type="RefSeq" id="WP_011105766.1">
    <property type="nucleotide sequence ID" value="NC_004603.1"/>
</dbReference>
<dbReference type="SMR" id="Q87QW2"/>
<dbReference type="GeneID" id="1188541"/>
<dbReference type="KEGG" id="vpa:VP1037"/>
<dbReference type="PATRIC" id="fig|223926.6.peg.983"/>
<dbReference type="eggNOG" id="COG3096">
    <property type="taxonomic scope" value="Bacteria"/>
</dbReference>
<dbReference type="HOGENOM" id="CLU_004430_0_0_6"/>
<dbReference type="Proteomes" id="UP000002493">
    <property type="component" value="Chromosome 1"/>
</dbReference>
<dbReference type="GO" id="GO:0005737">
    <property type="term" value="C:cytoplasm"/>
    <property type="evidence" value="ECO:0007669"/>
    <property type="project" value="UniProtKB-UniRule"/>
</dbReference>
<dbReference type="GO" id="GO:0009295">
    <property type="term" value="C:nucleoid"/>
    <property type="evidence" value="ECO:0007669"/>
    <property type="project" value="UniProtKB-SubCell"/>
</dbReference>
<dbReference type="GO" id="GO:0005524">
    <property type="term" value="F:ATP binding"/>
    <property type="evidence" value="ECO:0007669"/>
    <property type="project" value="UniProtKB-UniRule"/>
</dbReference>
<dbReference type="GO" id="GO:0003677">
    <property type="term" value="F:DNA binding"/>
    <property type="evidence" value="ECO:0007669"/>
    <property type="project" value="UniProtKB-UniRule"/>
</dbReference>
<dbReference type="GO" id="GO:0051301">
    <property type="term" value="P:cell division"/>
    <property type="evidence" value="ECO:0007669"/>
    <property type="project" value="UniProtKB-KW"/>
</dbReference>
<dbReference type="GO" id="GO:0030261">
    <property type="term" value="P:chromosome condensation"/>
    <property type="evidence" value="ECO:0007669"/>
    <property type="project" value="UniProtKB-KW"/>
</dbReference>
<dbReference type="GO" id="GO:0007059">
    <property type="term" value="P:chromosome segregation"/>
    <property type="evidence" value="ECO:0007669"/>
    <property type="project" value="UniProtKB-UniRule"/>
</dbReference>
<dbReference type="GO" id="GO:0006260">
    <property type="term" value="P:DNA replication"/>
    <property type="evidence" value="ECO:0007669"/>
    <property type="project" value="UniProtKB-UniRule"/>
</dbReference>
<dbReference type="FunFam" id="3.30.70.3500:FF:000001">
    <property type="entry name" value="Chromosome partition protein MukB"/>
    <property type="match status" value="1"/>
</dbReference>
<dbReference type="FunFam" id="3.40.1140.10:FF:000002">
    <property type="entry name" value="Chromosome partition protein MukB"/>
    <property type="match status" value="1"/>
</dbReference>
<dbReference type="Gene3D" id="1.20.58.850">
    <property type="match status" value="1"/>
</dbReference>
<dbReference type="Gene3D" id="3.40.1140.10">
    <property type="match status" value="2"/>
</dbReference>
<dbReference type="Gene3D" id="1.20.5.420">
    <property type="entry name" value="Immunoglobulin FC, subunit C"/>
    <property type="match status" value="1"/>
</dbReference>
<dbReference type="Gene3D" id="3.30.70.3500">
    <property type="entry name" value="MukB, hinge domain"/>
    <property type="match status" value="1"/>
</dbReference>
<dbReference type="HAMAP" id="MF_01800">
    <property type="entry name" value="MukB"/>
    <property type="match status" value="1"/>
</dbReference>
<dbReference type="InterPro" id="IPR012090">
    <property type="entry name" value="MukB"/>
</dbReference>
<dbReference type="InterPro" id="IPR050308">
    <property type="entry name" value="MukB/SMC"/>
</dbReference>
<dbReference type="InterPro" id="IPR032520">
    <property type="entry name" value="MukB_hinge"/>
</dbReference>
<dbReference type="InterPro" id="IPR042501">
    <property type="entry name" value="MukB_hinge_sf"/>
</dbReference>
<dbReference type="InterPro" id="IPR007406">
    <property type="entry name" value="MukB_N_dom"/>
</dbReference>
<dbReference type="InterPro" id="IPR027417">
    <property type="entry name" value="P-loop_NTPase"/>
</dbReference>
<dbReference type="NCBIfam" id="NF003422">
    <property type="entry name" value="PRK04863.1"/>
    <property type="match status" value="1"/>
</dbReference>
<dbReference type="PANTHER" id="PTHR42963">
    <property type="entry name" value="CHROMOSOME PARTITION PROTEIN MUKB"/>
    <property type="match status" value="1"/>
</dbReference>
<dbReference type="PANTHER" id="PTHR42963:SF1">
    <property type="entry name" value="DUF4476 DOMAIN-CONTAINING PROTEIN"/>
    <property type="match status" value="1"/>
</dbReference>
<dbReference type="Pfam" id="PF04310">
    <property type="entry name" value="MukB"/>
    <property type="match status" value="1"/>
</dbReference>
<dbReference type="Pfam" id="PF16330">
    <property type="entry name" value="MukB_hinge"/>
    <property type="match status" value="1"/>
</dbReference>
<dbReference type="Pfam" id="PF13558">
    <property type="entry name" value="SbcC_Walker_B"/>
    <property type="match status" value="1"/>
</dbReference>
<dbReference type="PIRSF" id="PIRSF005246">
    <property type="entry name" value="MukB"/>
    <property type="match status" value="1"/>
</dbReference>
<dbReference type="SUPFAM" id="SSF52540">
    <property type="entry name" value="P-loop containing nucleoside triphosphate hydrolases"/>
    <property type="match status" value="1"/>
</dbReference>
<gene>
    <name evidence="1" type="primary">mukB</name>
    <name type="ordered locus">VP1037</name>
</gene>
<feature type="chain" id="PRO_0000068230" description="Chromosome partition protein MukB">
    <location>
        <begin position="1"/>
        <end position="1487"/>
    </location>
</feature>
<feature type="region of interest" description="Flexible hinge" evidence="1">
    <location>
        <begin position="667"/>
        <end position="784"/>
    </location>
</feature>
<feature type="coiled-coil region" evidence="1">
    <location>
        <begin position="297"/>
        <end position="458"/>
    </location>
</feature>
<feature type="coiled-coil region" evidence="1">
    <location>
        <begin position="506"/>
        <end position="601"/>
    </location>
</feature>
<feature type="coiled-coil region" evidence="1">
    <location>
        <begin position="637"/>
        <end position="666"/>
    </location>
</feature>
<feature type="coiled-coil region" evidence="1">
    <location>
        <begin position="781"/>
        <end position="806"/>
    </location>
</feature>
<feature type="coiled-coil region" evidence="1">
    <location>
        <begin position="836"/>
        <end position="1109"/>
    </location>
</feature>
<feature type="coiled-coil region" evidence="1">
    <location>
        <begin position="1210"/>
        <end position="1266"/>
    </location>
</feature>
<feature type="binding site" evidence="1">
    <location>
        <begin position="34"/>
        <end position="41"/>
    </location>
    <ligand>
        <name>ATP</name>
        <dbReference type="ChEBI" id="CHEBI:30616"/>
    </ligand>
</feature>
<evidence type="ECO:0000255" key="1">
    <source>
        <dbReference type="HAMAP-Rule" id="MF_01800"/>
    </source>
</evidence>
<sequence length="1487" mass="169746">MIERGKYQSLTMVNWNGFFARTFDIDGLVTTLSGGNGAGKSTTMAAFITALIPDQTLLHFRNTTEAGSSQSSRDKGLYGKLQPGACYAALDVVNSRNQRLLFAVKLQQVAGRDKKVDIKPFVIQGLPSHVKPTDILVESVSATQARVRQINEVKDAIAEFEGVQFKAFSSIVDYHAQMFEFGVIPKKLRNSSDRSKFYRLIEASLYGGISSAITRSLRDYLLPQNGGVKKAFQDMESALRENRMTLEAIKTTQADRDLFKHLITESTNYVAADYMRHANDRRNKLEQTLSLRSELFGSRETLIEQNNLLNRVQEELELLIESESALEQDYQAASDHLQLVQNALRQQEKIERYQEDLEELSERLEEQMMVVEEAQERVMMVEEQATVAEEEVDSLKTQLADYQQALDVQQTRALQYQQAVQALEKAKQLLGDDCLTAESAQALVSELKNKESESTNALLSVKHKLDMSSAAAEQFETALKLVQSIVGQVERKDAAEQAKIVITKARESQQIAQNEQQWRAQHRDLERSLNQQRQARELVKEYQKQFHVELTDEITFEQERERHAMQIETLEMTQEELREQRSEQRRLEQDAAAEINKLEAIAPTWIAANDALEKLREQSGVDLEDRHAVMSHMQVVLEQEKELSLAKDKLAERRSQLESEIERLASPGGSNDPRLKGLADTLGGVLLSEIYDDITIDDAPYFSAMYGPARHAIVVSDLSGIEEKLVELDDCPEDLYIIEGDIDAFDDSSFDAEELEGAVCVRMNDRQMRYSRFPEIPLFGRAAREQRLELLRNEREEVVEKHAKAAFDSQKMQRLYQAFNQFVANHIQVAFEADPEQALANVREKRGQIARVLADLEAKEQQHRSQLQTSKQALSSLDKLAPNMALIEDDTLQARFDELEEKIAQLSEAKAFLNNHAKAVAELEKIASALDADPEQFDALEAEYKAADEQLQELKKQIFALSDLVERRHYFAYSDSVDLLNQSSELSEQLKAKLVQAEQMRTRSREELKQAQGQMNQYNQVLASLKSSHQAKLETVQEFKQELQEFGVNADEGAEERAIRRRDELHERLHTSRSRKSEYERTITSTELEMKGLAKRLKKVQKEYAELRTFVVAAKAGWCSVLRLARENDVERRLHKRELAYMSADELRSMSDKSLGALRLAVANNDDLRDALRLSEDNARPERKVLFYIAVYQHLRERIRQDIIRTDDPVEAIEEMEVELARLTEELTQRENRLAISSESVASIIKKTIQREQNRIRMLNQGLSNISFGQVKGVRLNVKIRESHEVLLHGLSSQQEQHKDLFESPRFTFSEAMAKLFQRVNPHIDMGQRSPQVLGEELLDYRNYLELSVEVNRGSDGWLQAESGALSTGEAIGTGQSILLMVVQSWEEESRRLRSKDIIPCRLLFLDEAARLDAKSISTLFELCDRLDMQLLIAAPENISPEKGTTYKLVRKVFKDHEHVHVVGLRGFGQTDKPKSEVQEMIEEFES</sequence>
<proteinExistence type="inferred from homology"/>
<comment type="function">
    <text evidence="1">Plays a central role in chromosome condensation, segregation and cell cycle progression. Functions as a homodimer, which is essential for chromosome partition. Involved in negative DNA supercoiling in vivo, and by this means organize and compact chromosomes. May achieve or facilitate chromosome segregation by condensation DNA from both sides of a centrally located replisome during cell division.</text>
</comment>
<comment type="subunit">
    <text evidence="1">Homodimerization via its hinge domain. Binds to DNA via its C-terminal region. Interacts, and probably forms a ternary complex, with MukE and MukF via its C-terminal region. The complex formation is stimulated by calcium or magnesium. Interacts with tubulin-related protein FtsZ.</text>
</comment>
<comment type="subcellular location">
    <subcellularLocation>
        <location evidence="1">Cytoplasm</location>
        <location evidence="1">Nucleoid</location>
    </subcellularLocation>
    <text evidence="1">Restricted to the nucleoid region.</text>
</comment>
<comment type="domain">
    <text evidence="1">The hinge domain, which separates the large intramolecular coiled coil regions, allows the homodimerization, forming a V-shaped homodimer.</text>
</comment>
<comment type="similarity">
    <text evidence="1">Belongs to the SMC family. MukB subfamily.</text>
</comment>
<accession>Q87QW2</accession>
<reference key="1">
    <citation type="journal article" date="2003" name="Lancet">
        <title>Genome sequence of Vibrio parahaemolyticus: a pathogenic mechanism distinct from that of V. cholerae.</title>
        <authorList>
            <person name="Makino K."/>
            <person name="Oshima K."/>
            <person name="Kurokawa K."/>
            <person name="Yokoyama K."/>
            <person name="Uda T."/>
            <person name="Tagomori K."/>
            <person name="Iijima Y."/>
            <person name="Najima M."/>
            <person name="Nakano M."/>
            <person name="Yamashita A."/>
            <person name="Kubota Y."/>
            <person name="Kimura S."/>
            <person name="Yasunaga T."/>
            <person name="Honda T."/>
            <person name="Shinagawa H."/>
            <person name="Hattori M."/>
            <person name="Iida T."/>
        </authorList>
    </citation>
    <scope>NUCLEOTIDE SEQUENCE [LARGE SCALE GENOMIC DNA]</scope>
    <source>
        <strain>RIMD 2210633</strain>
    </source>
</reference>
<protein>
    <recommendedName>
        <fullName evidence="1">Chromosome partition protein MukB</fullName>
    </recommendedName>
    <alternativeName>
        <fullName evidence="1">Structural maintenance of chromosome-related protein</fullName>
    </alternativeName>
</protein>